<organism>
    <name type="scientific">Bos taurus</name>
    <name type="common">Bovine</name>
    <dbReference type="NCBI Taxonomy" id="9913"/>
    <lineage>
        <taxon>Eukaryota</taxon>
        <taxon>Metazoa</taxon>
        <taxon>Chordata</taxon>
        <taxon>Craniata</taxon>
        <taxon>Vertebrata</taxon>
        <taxon>Euteleostomi</taxon>
        <taxon>Mammalia</taxon>
        <taxon>Eutheria</taxon>
        <taxon>Laurasiatheria</taxon>
        <taxon>Artiodactyla</taxon>
        <taxon>Ruminantia</taxon>
        <taxon>Pecora</taxon>
        <taxon>Bovidae</taxon>
        <taxon>Bovinae</taxon>
        <taxon>Bos</taxon>
    </lineage>
</organism>
<feature type="signal peptide" evidence="5">
    <location>
        <begin position="1"/>
        <end position="25"/>
    </location>
</feature>
<feature type="chain" id="PRO_0000418001" description="Lysyl oxidase homolog 2">
    <location>
        <begin position="26"/>
        <end position="774"/>
    </location>
</feature>
<feature type="domain" description="SRCR 1" evidence="6">
    <location>
        <begin position="58"/>
        <end position="159"/>
    </location>
</feature>
<feature type="domain" description="SRCR 2" evidence="6">
    <location>
        <begin position="188"/>
        <end position="302"/>
    </location>
</feature>
<feature type="domain" description="SRCR 3" evidence="6">
    <location>
        <begin position="326"/>
        <end position="425"/>
    </location>
</feature>
<feature type="domain" description="SRCR 4" evidence="6">
    <location>
        <begin position="435"/>
        <end position="544"/>
    </location>
</feature>
<feature type="region of interest" description="Lysyl-oxidase like" evidence="1">
    <location>
        <begin position="548"/>
        <end position="751"/>
    </location>
</feature>
<feature type="binding site" evidence="4">
    <location>
        <position position="549"/>
    </location>
    <ligand>
        <name>Ca(2+)</name>
        <dbReference type="ChEBI" id="CHEBI:29108"/>
    </ligand>
</feature>
<feature type="binding site" evidence="4">
    <location>
        <position position="550"/>
    </location>
    <ligand>
        <name>Ca(2+)</name>
        <dbReference type="ChEBI" id="CHEBI:29108"/>
    </ligand>
</feature>
<feature type="binding site" evidence="4">
    <location>
        <position position="626"/>
    </location>
    <ligand>
        <name>Cu cation</name>
        <dbReference type="ChEBI" id="CHEBI:23378"/>
    </ligand>
</feature>
<feature type="binding site" evidence="4">
    <location>
        <position position="628"/>
    </location>
    <ligand>
        <name>Cu cation</name>
        <dbReference type="ChEBI" id="CHEBI:23378"/>
    </ligand>
</feature>
<feature type="binding site" evidence="4">
    <location>
        <position position="630"/>
    </location>
    <ligand>
        <name>Cu cation</name>
        <dbReference type="ChEBI" id="CHEBI:23378"/>
    </ligand>
</feature>
<feature type="binding site" evidence="4">
    <location>
        <position position="722"/>
    </location>
    <ligand>
        <name>Ca(2+)</name>
        <dbReference type="ChEBI" id="CHEBI:29108"/>
    </ligand>
</feature>
<feature type="binding site" evidence="4">
    <location>
        <position position="724"/>
    </location>
    <ligand>
        <name>Ca(2+)</name>
        <dbReference type="ChEBI" id="CHEBI:29108"/>
    </ligand>
</feature>
<feature type="binding site" evidence="4">
    <location>
        <position position="727"/>
    </location>
    <ligand>
        <name>Ca(2+)</name>
        <dbReference type="ChEBI" id="CHEBI:29108"/>
    </ligand>
</feature>
<feature type="binding site" evidence="4">
    <location>
        <position position="728"/>
    </location>
    <ligand>
        <name>Ca(2+)</name>
        <dbReference type="ChEBI" id="CHEBI:29108"/>
    </ligand>
</feature>
<feature type="modified residue" description="2',4',5'-topaquinone" evidence="2">
    <location>
        <position position="689"/>
    </location>
</feature>
<feature type="glycosylation site" description="N-linked (GlcNAc...) asparagine" evidence="5">
    <location>
        <position position="288"/>
    </location>
</feature>
<feature type="glycosylation site" description="N-linked (GlcNAc...) asparagine" evidence="5">
    <location>
        <position position="455"/>
    </location>
</feature>
<feature type="glycosylation site" description="N-linked (GlcNAc...) asparagine" evidence="5">
    <location>
        <position position="644"/>
    </location>
</feature>
<feature type="disulfide bond" evidence="6">
    <location>
        <begin position="84"/>
        <end position="148"/>
    </location>
</feature>
<feature type="disulfide bond" evidence="6">
    <location>
        <begin position="97"/>
        <end position="158"/>
    </location>
</feature>
<feature type="disulfide bond" evidence="6">
    <location>
        <begin position="128"/>
        <end position="138"/>
    </location>
</feature>
<feature type="disulfide bond" evidence="6">
    <location>
        <begin position="218"/>
        <end position="291"/>
    </location>
</feature>
<feature type="disulfide bond" evidence="6">
    <location>
        <begin position="231"/>
        <end position="301"/>
    </location>
</feature>
<feature type="disulfide bond" evidence="6">
    <location>
        <begin position="265"/>
        <end position="275"/>
    </location>
</feature>
<feature type="disulfide bond" evidence="6">
    <location>
        <begin position="351"/>
        <end position="414"/>
    </location>
</feature>
<feature type="disulfide bond" evidence="6">
    <location>
        <begin position="364"/>
        <end position="424"/>
    </location>
</feature>
<feature type="disulfide bond" evidence="6">
    <location>
        <begin position="395"/>
        <end position="405"/>
    </location>
</feature>
<feature type="disulfide bond" evidence="6">
    <location>
        <begin position="464"/>
        <end position="530"/>
    </location>
</feature>
<feature type="disulfide bond" evidence="6">
    <location>
        <begin position="477"/>
        <end position="543"/>
    </location>
</feature>
<feature type="disulfide bond" evidence="6">
    <location>
        <begin position="511"/>
        <end position="521"/>
    </location>
</feature>
<feature type="disulfide bond" evidence="4">
    <location>
        <begin position="573"/>
        <end position="625"/>
    </location>
</feature>
<feature type="disulfide bond" evidence="4">
    <location>
        <begin position="579"/>
        <end position="695"/>
    </location>
</feature>
<feature type="disulfide bond" evidence="4">
    <location>
        <begin position="657"/>
        <end position="673"/>
    </location>
</feature>
<feature type="disulfide bond" evidence="4">
    <location>
        <begin position="663"/>
        <end position="685"/>
    </location>
</feature>
<feature type="disulfide bond" evidence="6">
    <location>
        <begin position="732"/>
        <end position="746"/>
    </location>
</feature>
<feature type="cross-link" description="Lysine tyrosylquinone (Lys-Tyr)" evidence="2">
    <location>
        <begin position="653"/>
        <end position="689"/>
    </location>
</feature>
<accession>A6H737</accession>
<accession>F6RUG1</accession>
<gene>
    <name type="primary">LOXL2</name>
</gene>
<name>LOXL2_BOVIN</name>
<dbReference type="EC" id="1.4.3.13" evidence="4"/>
<dbReference type="EMBL" id="DAAA02023574">
    <property type="status" value="NOT_ANNOTATED_CDS"/>
    <property type="molecule type" value="Genomic_DNA"/>
</dbReference>
<dbReference type="EMBL" id="DAAA02023575">
    <property type="status" value="NOT_ANNOTATED_CDS"/>
    <property type="molecule type" value="Genomic_DNA"/>
</dbReference>
<dbReference type="EMBL" id="DAAA02023576">
    <property type="status" value="NOT_ANNOTATED_CDS"/>
    <property type="molecule type" value="Genomic_DNA"/>
</dbReference>
<dbReference type="EMBL" id="DAAA02023577">
    <property type="status" value="NOT_ANNOTATED_CDS"/>
    <property type="molecule type" value="Genomic_DNA"/>
</dbReference>
<dbReference type="EMBL" id="DAAA02023578">
    <property type="status" value="NOT_ANNOTATED_CDS"/>
    <property type="molecule type" value="Genomic_DNA"/>
</dbReference>
<dbReference type="EMBL" id="BC146100">
    <property type="protein sequence ID" value="AAI46101.1"/>
    <property type="molecule type" value="mRNA"/>
</dbReference>
<dbReference type="RefSeq" id="NP_001092523.1">
    <property type="nucleotide sequence ID" value="NM_001099053.1"/>
</dbReference>
<dbReference type="SMR" id="A6H737"/>
<dbReference type="FunCoup" id="A6H737">
    <property type="interactions" value="264"/>
</dbReference>
<dbReference type="STRING" id="9913.ENSBTAP00000008159"/>
<dbReference type="GlyCosmos" id="A6H737">
    <property type="glycosylation" value="3 sites, No reported glycans"/>
</dbReference>
<dbReference type="GlyGen" id="A6H737">
    <property type="glycosylation" value="3 sites"/>
</dbReference>
<dbReference type="PaxDb" id="9913-ENSBTAP00000008159"/>
<dbReference type="GeneID" id="532684"/>
<dbReference type="KEGG" id="bta:532684"/>
<dbReference type="CTD" id="4017"/>
<dbReference type="VEuPathDB" id="HostDB:ENSBTAG00000006214"/>
<dbReference type="eggNOG" id="ENOG502QSX8">
    <property type="taxonomic scope" value="Eukaryota"/>
</dbReference>
<dbReference type="InParanoid" id="A6H737"/>
<dbReference type="OMA" id="MALSHCR"/>
<dbReference type="OrthoDB" id="547291at2759"/>
<dbReference type="Reactome" id="R-BTA-1566948">
    <property type="pathway name" value="Elastic fibre formation"/>
</dbReference>
<dbReference type="Reactome" id="R-BTA-2243919">
    <property type="pathway name" value="Crosslinking of collagen fibrils"/>
</dbReference>
<dbReference type="Proteomes" id="UP000009136">
    <property type="component" value="Chromosome 8"/>
</dbReference>
<dbReference type="Bgee" id="ENSBTAG00000006214">
    <property type="expression patterns" value="Expressed in theca cell and 96 other cell types or tissues"/>
</dbReference>
<dbReference type="GO" id="GO:0005604">
    <property type="term" value="C:basement membrane"/>
    <property type="evidence" value="ECO:0000250"/>
    <property type="project" value="UniProtKB"/>
</dbReference>
<dbReference type="GO" id="GO:0000785">
    <property type="term" value="C:chromatin"/>
    <property type="evidence" value="ECO:0000250"/>
    <property type="project" value="UniProtKB"/>
</dbReference>
<dbReference type="GO" id="GO:0062023">
    <property type="term" value="C:collagen-containing extracellular matrix"/>
    <property type="evidence" value="ECO:0000318"/>
    <property type="project" value="GO_Central"/>
</dbReference>
<dbReference type="GO" id="GO:0005783">
    <property type="term" value="C:endoplasmic reticulum"/>
    <property type="evidence" value="ECO:0000250"/>
    <property type="project" value="UniProtKB"/>
</dbReference>
<dbReference type="GO" id="GO:0005615">
    <property type="term" value="C:extracellular space"/>
    <property type="evidence" value="ECO:0000250"/>
    <property type="project" value="UniProtKB"/>
</dbReference>
<dbReference type="GO" id="GO:0016020">
    <property type="term" value="C:membrane"/>
    <property type="evidence" value="ECO:0007669"/>
    <property type="project" value="InterPro"/>
</dbReference>
<dbReference type="GO" id="GO:0005634">
    <property type="term" value="C:nucleus"/>
    <property type="evidence" value="ECO:0000250"/>
    <property type="project" value="UniProtKB"/>
</dbReference>
<dbReference type="GO" id="GO:0005509">
    <property type="term" value="F:calcium ion binding"/>
    <property type="evidence" value="ECO:0000250"/>
    <property type="project" value="UniProtKB"/>
</dbReference>
<dbReference type="GO" id="GO:0005507">
    <property type="term" value="F:copper ion binding"/>
    <property type="evidence" value="ECO:0000250"/>
    <property type="project" value="UniProtKB"/>
</dbReference>
<dbReference type="GO" id="GO:0070492">
    <property type="term" value="F:oligosaccharide binding"/>
    <property type="evidence" value="ECO:0000250"/>
    <property type="project" value="UniProtKB"/>
</dbReference>
<dbReference type="GO" id="GO:0004720">
    <property type="term" value="F:protein-lysine 6-oxidase activity"/>
    <property type="evidence" value="ECO:0000250"/>
    <property type="project" value="UniProtKB"/>
</dbReference>
<dbReference type="GO" id="GO:0030199">
    <property type="term" value="P:collagen fibril organization"/>
    <property type="evidence" value="ECO:0000250"/>
    <property type="project" value="UniProtKB"/>
</dbReference>
<dbReference type="GO" id="GO:0043542">
    <property type="term" value="P:endothelial cell migration"/>
    <property type="evidence" value="ECO:0000250"/>
    <property type="project" value="UniProtKB"/>
</dbReference>
<dbReference type="GO" id="GO:0001935">
    <property type="term" value="P:endothelial cell proliferation"/>
    <property type="evidence" value="ECO:0000250"/>
    <property type="project" value="UniProtKB"/>
</dbReference>
<dbReference type="GO" id="GO:0001837">
    <property type="term" value="P:epithelial to mesenchymal transition"/>
    <property type="evidence" value="ECO:0000250"/>
    <property type="project" value="UniProtKB"/>
</dbReference>
<dbReference type="GO" id="GO:0070828">
    <property type="term" value="P:heterochromatin organization"/>
    <property type="evidence" value="ECO:0000250"/>
    <property type="project" value="UniProtKB"/>
</dbReference>
<dbReference type="GO" id="GO:0045892">
    <property type="term" value="P:negative regulation of DNA-templated transcription"/>
    <property type="evidence" value="ECO:0000250"/>
    <property type="project" value="UniProtKB"/>
</dbReference>
<dbReference type="GO" id="GO:1902455">
    <property type="term" value="P:negative regulation of stem cell population maintenance"/>
    <property type="evidence" value="ECO:0000250"/>
    <property type="project" value="UniProtKB"/>
</dbReference>
<dbReference type="GO" id="GO:0000122">
    <property type="term" value="P:negative regulation of transcription by RNA polymerase II"/>
    <property type="evidence" value="ECO:0000250"/>
    <property type="project" value="UniProtKB"/>
</dbReference>
<dbReference type="GO" id="GO:0018057">
    <property type="term" value="P:peptidyl-lysine oxidation"/>
    <property type="evidence" value="ECO:0000250"/>
    <property type="project" value="UniProtKB"/>
</dbReference>
<dbReference type="GO" id="GO:0032332">
    <property type="term" value="P:positive regulation of chondrocyte differentiation"/>
    <property type="evidence" value="ECO:0000250"/>
    <property type="project" value="UniProtKB"/>
</dbReference>
<dbReference type="GO" id="GO:0010718">
    <property type="term" value="P:positive regulation of epithelial to mesenchymal transition"/>
    <property type="evidence" value="ECO:0000250"/>
    <property type="project" value="UniProtKB"/>
</dbReference>
<dbReference type="GO" id="GO:0036211">
    <property type="term" value="P:protein modification process"/>
    <property type="evidence" value="ECO:0000250"/>
    <property type="project" value="UniProtKB"/>
</dbReference>
<dbReference type="GO" id="GO:0046688">
    <property type="term" value="P:response to copper ion"/>
    <property type="evidence" value="ECO:0000250"/>
    <property type="project" value="UniProtKB"/>
</dbReference>
<dbReference type="GO" id="GO:0001666">
    <property type="term" value="P:response to hypoxia"/>
    <property type="evidence" value="ECO:0000250"/>
    <property type="project" value="UniProtKB"/>
</dbReference>
<dbReference type="GO" id="GO:0002040">
    <property type="term" value="P:sprouting angiogenesis"/>
    <property type="evidence" value="ECO:0000250"/>
    <property type="project" value="UniProtKB"/>
</dbReference>
<dbReference type="FunFam" id="3.10.250.10:FF:000001">
    <property type="entry name" value="Lysyl oxidase 4 isoform X1"/>
    <property type="match status" value="2"/>
</dbReference>
<dbReference type="FunFam" id="3.10.250.10:FF:000008">
    <property type="entry name" value="Lysyl oxidase homolog 2"/>
    <property type="match status" value="1"/>
</dbReference>
<dbReference type="FunFam" id="3.10.250.10:FF:000014">
    <property type="entry name" value="Lysyl oxidase homolog 2"/>
    <property type="match status" value="1"/>
</dbReference>
<dbReference type="Gene3D" id="3.10.250.10">
    <property type="entry name" value="SRCR-like domain"/>
    <property type="match status" value="4"/>
</dbReference>
<dbReference type="InterPro" id="IPR050912">
    <property type="entry name" value="LOX-like_protein"/>
</dbReference>
<dbReference type="InterPro" id="IPR001695">
    <property type="entry name" value="Lysyl_oxidase"/>
</dbReference>
<dbReference type="InterPro" id="IPR019828">
    <property type="entry name" value="Lysyl_oxidase_CS"/>
</dbReference>
<dbReference type="InterPro" id="IPR001190">
    <property type="entry name" value="SRCR"/>
</dbReference>
<dbReference type="InterPro" id="IPR036772">
    <property type="entry name" value="SRCR-like_dom_sf"/>
</dbReference>
<dbReference type="PANTHER" id="PTHR45817:SF1">
    <property type="entry name" value="LYSYL OXIDASE HOMOLOG 2"/>
    <property type="match status" value="1"/>
</dbReference>
<dbReference type="PANTHER" id="PTHR45817">
    <property type="entry name" value="LYSYL OXIDASE-LIKE-RELATED"/>
    <property type="match status" value="1"/>
</dbReference>
<dbReference type="Pfam" id="PF01186">
    <property type="entry name" value="Lysyl_oxidase"/>
    <property type="match status" value="1"/>
</dbReference>
<dbReference type="Pfam" id="PF00530">
    <property type="entry name" value="SRCR"/>
    <property type="match status" value="4"/>
</dbReference>
<dbReference type="PRINTS" id="PR00074">
    <property type="entry name" value="LYSYLOXIDASE"/>
</dbReference>
<dbReference type="PRINTS" id="PR00258">
    <property type="entry name" value="SPERACTRCPTR"/>
</dbReference>
<dbReference type="SMART" id="SM00202">
    <property type="entry name" value="SR"/>
    <property type="match status" value="4"/>
</dbReference>
<dbReference type="SUPFAM" id="SSF56487">
    <property type="entry name" value="SRCR-like"/>
    <property type="match status" value="4"/>
</dbReference>
<dbReference type="PROSITE" id="PS00926">
    <property type="entry name" value="LYSYL_OXIDASE"/>
    <property type="match status" value="1"/>
</dbReference>
<dbReference type="PROSITE" id="PS00420">
    <property type="entry name" value="SRCR_1"/>
    <property type="match status" value="2"/>
</dbReference>
<dbReference type="PROSITE" id="PS50287">
    <property type="entry name" value="SRCR_2"/>
    <property type="match status" value="4"/>
</dbReference>
<sequence length="774" mass="86785">MERRGSSCLCRCLALLALLPTLSLAQYESWRHYPEYFQEPAPEYHRPEVPSDVAKIQLRLAGQKRKHSEGRVEVYYDGQWGTVCDDDFTIHAAHVVCRELGYVEAKSWTASSSYGKGEGPIWLDNVYCTGSEATLAACSSNGWGVTDCKHTEDVGVVCSEKRIPGFKFDNSLINSIENMNIQVEDIRIRAILSAFRKRTPVTEGYVEVKEGKTWKQICDKHWTAKNSRVVCGMFGFPGEKTYNTKVYKMFAARKKQRYWPYSMDCTGTEAHISSCKLGPQVSLDPVKNVTCENGLPAVVSCVPGQVFSPDGPSRFRKAYKPEQPLVRLRGGANVGEGRVEVLKNGEWGTVCDDKWDLVSASVVCRELGFGSAKEAITGSRLGQGIGPIHLNEIECTGNEKSIIDCKFNAESQGCNHEEDAAVRCNIPAMGFQKKLRLNGGRNPYEGRVEVLVERNGSLVWGMVCGENWGIVEAMVVCRQLGLGFASNAFQETWYWHGNINANKVVMSGVKCSGTELSLAHCRHDGEDVACPEGGVRYGAGVACSETAPDLVLNAEIVQQSTYLEDRPMFMLQCAMEENCLSASAAQTNPTTGYRRLLRFSSQIHNNGQSDFRPKNGRHAWIWHDCHRHYHSMEVFTHYDLLNLNGTKVAEGHKASFCLEDTECEGDIQKSYECANFGEQGITMGCWDMYRHDIDCQWVDITDVPPGDYLFQVVINPNYEVAESDYTNNIMKCRTRYDGHRIWMYNCHIGGSFSEETEKKFEHFSGLINNQVSKR</sequence>
<proteinExistence type="evidence at transcript level"/>
<comment type="function">
    <text evidence="3 4">Mediates the post-translational oxidative deamination of lysine residues on target proteins leading to the formation of deaminated lysine (allysine). Acts as a transcription corepressor and specifically mediates deamination of trimethylated 'Lys-4' of histone H3 (H3K4me3), a specific tag for epigenetic transcriptional activation. Shows no activity against histone H3 when it is trimethylated on 'Lys-9' (H3K9me3) or 'Lys-27' (H3K27me3) or when 'Lys-4' is monomethylated (H3K4me1) or dimethylated (H3K4me2). Also mediates deamination of methylated TAF10, a member of the transcription factor IID (TFIID) complex, which induces release of TAF10 from promoters, leading to inhibition of TFIID-dependent transcription. LOXL2-mediated deamination of TAF10 results in transcriptional repression of genes required for embryonic stem cell pluripotency including POU5F1/OCT4, NANOG, KLF4 and SOX2. Involved in epithelial to mesenchymal transition (EMT) via interaction with SNAI1 and participates in repression of E-cadherin CDH1, probably by mediating deamination of histone H3. During EMT, involved with SNAI1 in negatively regulating pericentromeric heterochromatin transcription. SNAI1 recruits LOXL2 to pericentromeric regions to oxidize histone H3 and repress transcription which leads to release of heterochromatin component CBX5/HP1A, enabling chromatin reorganization and acquisition of mesenchymal traits. Interacts with the endoplasmic reticulum protein HSPA5 which activates the IRE1-XBP1 pathway of the unfolded protein response, leading to expression of several transcription factors involved in EMT and subsequent EMT induction. When secreted into the extracellular matrix, promotes cross-linking of extracellular matrix proteins by mediating oxidative deamination of peptidyl lysine residues in precursors to fibrous collagen and elastin. Acts as a regulator of sprouting angiogenesis, probably via collagen IV scaffolding. Acts as a regulator of chondrocyte differentiation, probably by regulating expression of factors that control chondrocyte differentiation.</text>
</comment>
<comment type="catalytic activity">
    <reaction evidence="4">
        <text>L-lysyl-[protein] + O2 + H2O = (S)-2-amino-6-oxohexanoyl-[protein] + H2O2 + NH4(+)</text>
        <dbReference type="Rhea" id="RHEA:24544"/>
        <dbReference type="Rhea" id="RHEA-COMP:9752"/>
        <dbReference type="Rhea" id="RHEA-COMP:12448"/>
        <dbReference type="ChEBI" id="CHEBI:15377"/>
        <dbReference type="ChEBI" id="CHEBI:15379"/>
        <dbReference type="ChEBI" id="CHEBI:16240"/>
        <dbReference type="ChEBI" id="CHEBI:28938"/>
        <dbReference type="ChEBI" id="CHEBI:29969"/>
        <dbReference type="ChEBI" id="CHEBI:131803"/>
        <dbReference type="EC" id="1.4.3.13"/>
    </reaction>
</comment>
<comment type="cofactor">
    <cofactor evidence="4">
        <name>Cu cation</name>
        <dbReference type="ChEBI" id="CHEBI:23378"/>
    </cofactor>
</comment>
<comment type="cofactor">
    <cofactor evidence="4">
        <name>lysine tyrosylquinone residue</name>
        <dbReference type="ChEBI" id="CHEBI:20489"/>
    </cofactor>
    <text evidence="2 4">Contains 1 lysine tyrosylquinone.</text>
</comment>
<comment type="activity regulation">
    <text evidence="4">Specifically inhibited by a mouse monoclonal antibody AB0023, inhibition occurs in a non-competitive manner.</text>
</comment>
<comment type="subunit">
    <text evidence="4">Component of some chromatin repressor complex. Interacts with SNAI1. Interacts with TAF10. Interacts with HSPA5. Interacts with EFEMP2 (By similarity).</text>
</comment>
<comment type="subcellular location">
    <subcellularLocation>
        <location evidence="4">Secreted</location>
        <location evidence="4">Extracellular space</location>
        <location evidence="4">Extracellular matrix</location>
        <location evidence="4">Basement membrane</location>
    </subcellularLocation>
    <subcellularLocation>
        <location evidence="4">Nucleus</location>
    </subcellularLocation>
    <subcellularLocation>
        <location evidence="4">Chromosome</location>
    </subcellularLocation>
    <subcellularLocation>
        <location evidence="4">Endoplasmic reticulum</location>
    </subcellularLocation>
    <text evidence="4">Associated with chromatin. It is unclear how LOXL2 is nuclear as it contains a signal sequence and has been shown to be secreted. However, a number of reports confirm its intracellular location and its key role in transcription regulation.</text>
</comment>
<comment type="domain">
    <text evidence="1">The fourth SRCR domain plays an important role in optimizing the catalytic activity of the lysyl-oxidase like (LOX) catalytic domain.</text>
</comment>
<comment type="PTM">
    <text evidence="4">The lysine tyrosylquinone cross-link (LTQ) is generated by condensation of the epsilon-amino group of a lysine with a topaquinone produced by oxidation of tyrosine.</text>
</comment>
<comment type="PTM">
    <text evidence="4">N-glycosylated. N-glycosylation on Asn-455 and Asn-644 may be essential for proper folding and secretion; may be composed of a fucosylated carbohydrates attached to a trimannose N-linked glycan core.</text>
</comment>
<comment type="similarity">
    <text evidence="7">Belongs to the lysyl oxidase family.</text>
</comment>
<reference key="1">
    <citation type="journal article" date="2009" name="Genome Biol.">
        <title>A whole-genome assembly of the domestic cow, Bos taurus.</title>
        <authorList>
            <person name="Zimin A.V."/>
            <person name="Delcher A.L."/>
            <person name="Florea L."/>
            <person name="Kelley D.R."/>
            <person name="Schatz M.C."/>
            <person name="Puiu D."/>
            <person name="Hanrahan F."/>
            <person name="Pertea G."/>
            <person name="Van Tassell C.P."/>
            <person name="Sonstegard T.S."/>
            <person name="Marcais G."/>
            <person name="Roberts M."/>
            <person name="Subramanian P."/>
            <person name="Yorke J.A."/>
            <person name="Salzberg S.L."/>
        </authorList>
    </citation>
    <scope>NUCLEOTIDE SEQUENCE [LARGE SCALE GENOMIC DNA]</scope>
    <source>
        <strain>Hereford</strain>
    </source>
</reference>
<reference key="2">
    <citation type="submission" date="2007-06" db="EMBL/GenBank/DDBJ databases">
        <authorList>
            <consortium name="NIH - Mammalian Gene Collection (MGC) project"/>
        </authorList>
    </citation>
    <scope>NUCLEOTIDE SEQUENCE [LARGE SCALE MRNA]</scope>
    <source>
        <strain>Hereford</strain>
        <tissue>Fetal skin</tissue>
    </source>
</reference>
<protein>
    <recommendedName>
        <fullName>Lysyl oxidase homolog 2</fullName>
        <ecNumber evidence="4">1.4.3.13</ecNumber>
    </recommendedName>
    <alternativeName>
        <fullName>Lysyl oxidase-like protein 2</fullName>
    </alternativeName>
</protein>
<keyword id="KW-0084">Basement membrane</keyword>
<keyword id="KW-0106">Calcium</keyword>
<keyword id="KW-0156">Chromatin regulator</keyword>
<keyword id="KW-0158">Chromosome</keyword>
<keyword id="KW-0186">Copper</keyword>
<keyword id="KW-1015">Disulfide bond</keyword>
<keyword id="KW-0256">Endoplasmic reticulum</keyword>
<keyword id="KW-0272">Extracellular matrix</keyword>
<keyword id="KW-0325">Glycoprotein</keyword>
<keyword id="KW-0886">LTQ</keyword>
<keyword id="KW-0479">Metal-binding</keyword>
<keyword id="KW-0539">Nucleus</keyword>
<keyword id="KW-0560">Oxidoreductase</keyword>
<keyword id="KW-1185">Reference proteome</keyword>
<keyword id="KW-0677">Repeat</keyword>
<keyword id="KW-0678">Repressor</keyword>
<keyword id="KW-0964">Secreted</keyword>
<keyword id="KW-0732">Signal</keyword>
<keyword id="KW-0801">TPQ</keyword>
<keyword id="KW-0804">Transcription</keyword>
<keyword id="KW-0805">Transcription regulation</keyword>
<evidence type="ECO:0000250" key="1"/>
<evidence type="ECO:0000250" key="2">
    <source>
        <dbReference type="UniProtKB" id="P33072"/>
    </source>
</evidence>
<evidence type="ECO:0000250" key="3">
    <source>
        <dbReference type="UniProtKB" id="P58022"/>
    </source>
</evidence>
<evidence type="ECO:0000250" key="4">
    <source>
        <dbReference type="UniProtKB" id="Q9Y4K0"/>
    </source>
</evidence>
<evidence type="ECO:0000255" key="5"/>
<evidence type="ECO:0000255" key="6">
    <source>
        <dbReference type="PROSITE-ProRule" id="PRU00196"/>
    </source>
</evidence>
<evidence type="ECO:0000305" key="7"/>